<dbReference type="EMBL" id="CP000001">
    <property type="protein sequence ID" value="AAU16584.1"/>
    <property type="status" value="ALT_INIT"/>
    <property type="molecule type" value="Genomic_DNA"/>
</dbReference>
<dbReference type="RefSeq" id="WP_001984764.1">
    <property type="nucleotide sequence ID" value="NZ_CP009968.1"/>
</dbReference>
<dbReference type="SMR" id="Q636A3"/>
<dbReference type="GeneID" id="93007188"/>
<dbReference type="KEGG" id="bcz:BCE33L3682"/>
<dbReference type="PATRIC" id="fig|288681.22.peg.1729"/>
<dbReference type="Proteomes" id="UP000002612">
    <property type="component" value="Chromosome"/>
</dbReference>
<dbReference type="GO" id="GO:0015934">
    <property type="term" value="C:large ribosomal subunit"/>
    <property type="evidence" value="ECO:0007669"/>
    <property type="project" value="InterPro"/>
</dbReference>
<dbReference type="GO" id="GO:0003735">
    <property type="term" value="F:structural constituent of ribosome"/>
    <property type="evidence" value="ECO:0007669"/>
    <property type="project" value="InterPro"/>
</dbReference>
<dbReference type="GO" id="GO:0006412">
    <property type="term" value="P:translation"/>
    <property type="evidence" value="ECO:0007669"/>
    <property type="project" value="UniProtKB-UniRule"/>
</dbReference>
<dbReference type="HAMAP" id="MF_00340">
    <property type="entry name" value="Ribosomal_bL32"/>
    <property type="match status" value="1"/>
</dbReference>
<dbReference type="InterPro" id="IPR002677">
    <property type="entry name" value="Ribosomal_bL32"/>
</dbReference>
<dbReference type="InterPro" id="IPR044957">
    <property type="entry name" value="Ribosomal_bL32_bact"/>
</dbReference>
<dbReference type="InterPro" id="IPR011332">
    <property type="entry name" value="Ribosomal_zn-bd"/>
</dbReference>
<dbReference type="NCBIfam" id="TIGR01031">
    <property type="entry name" value="rpmF_bact"/>
    <property type="match status" value="1"/>
</dbReference>
<dbReference type="PANTHER" id="PTHR35534">
    <property type="entry name" value="50S RIBOSOMAL PROTEIN L32"/>
    <property type="match status" value="1"/>
</dbReference>
<dbReference type="PANTHER" id="PTHR35534:SF2">
    <property type="entry name" value="LARGE RIBOSOMAL SUBUNIT PROTEIN BL32"/>
    <property type="match status" value="1"/>
</dbReference>
<dbReference type="Pfam" id="PF01783">
    <property type="entry name" value="Ribosomal_L32p"/>
    <property type="match status" value="1"/>
</dbReference>
<dbReference type="SUPFAM" id="SSF57829">
    <property type="entry name" value="Zn-binding ribosomal proteins"/>
    <property type="match status" value="1"/>
</dbReference>
<evidence type="ECO:0000255" key="1">
    <source>
        <dbReference type="HAMAP-Rule" id="MF_00340"/>
    </source>
</evidence>
<evidence type="ECO:0000305" key="2"/>
<feature type="chain" id="PRO_0000225701" description="Large ribosomal subunit protein bL32">
    <location>
        <begin position="1"/>
        <end position="57"/>
    </location>
</feature>
<sequence length="57" mass="6394">MAVPFRRTSKTVKRKRRTHFKLSVPGMVECPSCGEAKLAHRVCKACGTYKGKEVISK</sequence>
<keyword id="KW-0687">Ribonucleoprotein</keyword>
<keyword id="KW-0689">Ribosomal protein</keyword>
<name>RL32_BACCZ</name>
<proteinExistence type="inferred from homology"/>
<accession>Q636A3</accession>
<comment type="similarity">
    <text evidence="1">Belongs to the bacterial ribosomal protein bL32 family.</text>
</comment>
<comment type="sequence caution" evidence="2">
    <conflict type="erroneous initiation">
        <sequence resource="EMBL-CDS" id="AAU16584"/>
    </conflict>
</comment>
<reference key="1">
    <citation type="journal article" date="2006" name="J. Bacteriol.">
        <title>Pathogenomic sequence analysis of Bacillus cereus and Bacillus thuringiensis isolates closely related to Bacillus anthracis.</title>
        <authorList>
            <person name="Han C.S."/>
            <person name="Xie G."/>
            <person name="Challacombe J.F."/>
            <person name="Altherr M.R."/>
            <person name="Bhotika S.S."/>
            <person name="Bruce D."/>
            <person name="Campbell C.S."/>
            <person name="Campbell M.L."/>
            <person name="Chen J."/>
            <person name="Chertkov O."/>
            <person name="Cleland C."/>
            <person name="Dimitrijevic M."/>
            <person name="Doggett N.A."/>
            <person name="Fawcett J.J."/>
            <person name="Glavina T."/>
            <person name="Goodwin L.A."/>
            <person name="Hill K.K."/>
            <person name="Hitchcock P."/>
            <person name="Jackson P.J."/>
            <person name="Keim P."/>
            <person name="Kewalramani A.R."/>
            <person name="Longmire J."/>
            <person name="Lucas S."/>
            <person name="Malfatti S."/>
            <person name="McMurry K."/>
            <person name="Meincke L.J."/>
            <person name="Misra M."/>
            <person name="Moseman B.L."/>
            <person name="Mundt M."/>
            <person name="Munk A.C."/>
            <person name="Okinaka R.T."/>
            <person name="Parson-Quintana B."/>
            <person name="Reilly L.P."/>
            <person name="Richardson P."/>
            <person name="Robinson D.L."/>
            <person name="Rubin E."/>
            <person name="Saunders E."/>
            <person name="Tapia R."/>
            <person name="Tesmer J.G."/>
            <person name="Thayer N."/>
            <person name="Thompson L.S."/>
            <person name="Tice H."/>
            <person name="Ticknor L.O."/>
            <person name="Wills P.L."/>
            <person name="Brettin T.S."/>
            <person name="Gilna P."/>
        </authorList>
    </citation>
    <scope>NUCLEOTIDE SEQUENCE [LARGE SCALE GENOMIC DNA]</scope>
    <source>
        <strain>ZK / E33L</strain>
    </source>
</reference>
<gene>
    <name evidence="1" type="primary">rpmF</name>
    <name type="ordered locus">BCE33L3682</name>
</gene>
<protein>
    <recommendedName>
        <fullName evidence="1">Large ribosomal subunit protein bL32</fullName>
    </recommendedName>
    <alternativeName>
        <fullName evidence="2">50S ribosomal protein L32</fullName>
    </alternativeName>
</protein>
<organism>
    <name type="scientific">Bacillus cereus (strain ZK / E33L)</name>
    <dbReference type="NCBI Taxonomy" id="288681"/>
    <lineage>
        <taxon>Bacteria</taxon>
        <taxon>Bacillati</taxon>
        <taxon>Bacillota</taxon>
        <taxon>Bacilli</taxon>
        <taxon>Bacillales</taxon>
        <taxon>Bacillaceae</taxon>
        <taxon>Bacillus</taxon>
        <taxon>Bacillus cereus group</taxon>
    </lineage>
</organism>